<comment type="catalytic activity">
    <reaction>
        <text>1-(5-phospho-beta-D-ribosyl)-ATP + H2O = 1-(5-phospho-beta-D-ribosyl)-5'-AMP + diphosphate + H(+)</text>
        <dbReference type="Rhea" id="RHEA:22828"/>
        <dbReference type="ChEBI" id="CHEBI:15377"/>
        <dbReference type="ChEBI" id="CHEBI:15378"/>
        <dbReference type="ChEBI" id="CHEBI:33019"/>
        <dbReference type="ChEBI" id="CHEBI:59457"/>
        <dbReference type="ChEBI" id="CHEBI:73183"/>
        <dbReference type="EC" id="3.6.1.31"/>
    </reaction>
</comment>
<comment type="pathway">
    <text>Amino-acid biosynthesis; L-histidine biosynthesis; L-histidine from 5-phospho-alpha-D-ribose 1-diphosphate: step 2/9.</text>
</comment>
<comment type="subcellular location">
    <subcellularLocation>
        <location evidence="1">Cytoplasm</location>
    </subcellularLocation>
</comment>
<comment type="similarity">
    <text evidence="2">Belongs to the PRA-PH family.</text>
</comment>
<keyword id="KW-0028">Amino-acid biosynthesis</keyword>
<keyword id="KW-0067">ATP-binding</keyword>
<keyword id="KW-0963">Cytoplasm</keyword>
<keyword id="KW-0368">Histidine biosynthesis</keyword>
<keyword id="KW-0378">Hydrolase</keyword>
<keyword id="KW-0547">Nucleotide-binding</keyword>
<keyword id="KW-1185">Reference proteome</keyword>
<dbReference type="EC" id="3.6.1.31"/>
<dbReference type="EMBL" id="BA000023">
    <property type="protein sequence ID" value="BAK54590.1"/>
    <property type="molecule type" value="Genomic_DNA"/>
</dbReference>
<dbReference type="RefSeq" id="WP_052846573.1">
    <property type="nucleotide sequence ID" value="NC_003106.2"/>
</dbReference>
<dbReference type="SMR" id="Q970Y8"/>
<dbReference type="STRING" id="273063.STK_14650"/>
<dbReference type="GeneID" id="95642308"/>
<dbReference type="KEGG" id="sto:STK_14650"/>
<dbReference type="PATRIC" id="fig|273063.9.peg.1670"/>
<dbReference type="eggNOG" id="arCOG02677">
    <property type="taxonomic scope" value="Archaea"/>
</dbReference>
<dbReference type="OrthoDB" id="39686at2157"/>
<dbReference type="UniPathway" id="UPA00031">
    <property type="reaction ID" value="UER00007"/>
</dbReference>
<dbReference type="Proteomes" id="UP000001015">
    <property type="component" value="Chromosome"/>
</dbReference>
<dbReference type="GO" id="GO:0005737">
    <property type="term" value="C:cytoplasm"/>
    <property type="evidence" value="ECO:0007669"/>
    <property type="project" value="UniProtKB-SubCell"/>
</dbReference>
<dbReference type="GO" id="GO:0005524">
    <property type="term" value="F:ATP binding"/>
    <property type="evidence" value="ECO:0007669"/>
    <property type="project" value="UniProtKB-KW"/>
</dbReference>
<dbReference type="GO" id="GO:0004636">
    <property type="term" value="F:phosphoribosyl-ATP diphosphatase activity"/>
    <property type="evidence" value="ECO:0007669"/>
    <property type="project" value="UniProtKB-UniRule"/>
</dbReference>
<dbReference type="GO" id="GO:0000105">
    <property type="term" value="P:L-histidine biosynthetic process"/>
    <property type="evidence" value="ECO:0007669"/>
    <property type="project" value="UniProtKB-UniRule"/>
</dbReference>
<dbReference type="CDD" id="cd11534">
    <property type="entry name" value="NTP-PPase_HisIE_like"/>
    <property type="match status" value="1"/>
</dbReference>
<dbReference type="Gene3D" id="1.10.287.1080">
    <property type="entry name" value="MazG-like"/>
    <property type="match status" value="1"/>
</dbReference>
<dbReference type="HAMAP" id="MF_01020">
    <property type="entry name" value="HisE"/>
    <property type="match status" value="1"/>
</dbReference>
<dbReference type="InterPro" id="IPR008179">
    <property type="entry name" value="HisE"/>
</dbReference>
<dbReference type="InterPro" id="IPR021130">
    <property type="entry name" value="PRib-ATP_PPHydrolase-like"/>
</dbReference>
<dbReference type="NCBIfam" id="TIGR03188">
    <property type="entry name" value="histidine_hisI"/>
    <property type="match status" value="1"/>
</dbReference>
<dbReference type="PANTHER" id="PTHR42945">
    <property type="entry name" value="HISTIDINE BIOSYNTHESIS BIFUNCTIONAL PROTEIN"/>
    <property type="match status" value="1"/>
</dbReference>
<dbReference type="PANTHER" id="PTHR42945:SF1">
    <property type="entry name" value="HISTIDINE BIOSYNTHESIS BIFUNCTIONAL PROTEIN HIS7"/>
    <property type="match status" value="1"/>
</dbReference>
<dbReference type="Pfam" id="PF01503">
    <property type="entry name" value="PRA-PH"/>
    <property type="match status" value="1"/>
</dbReference>
<dbReference type="SUPFAM" id="SSF101386">
    <property type="entry name" value="all-alpha NTP pyrophosphatases"/>
    <property type="match status" value="1"/>
</dbReference>
<proteinExistence type="inferred from homology"/>
<accession>Q970Y8</accession>
<accession>F9VNE4</accession>
<name>HIS2_SULTO</name>
<feature type="chain" id="PRO_0000136399" description="Phosphoribosyl-ATP pyrophosphatase">
    <location>
        <begin position="1"/>
        <end position="94"/>
    </location>
</feature>
<sequence>MSSNVLDTLYSIILDRISNKKEGSYTVKLLEKGKPYIARKVGEEATEVIVASLSEGRERFISEVADLIYHLFVLMAVEGVKPEDVYEELKRRMK</sequence>
<gene>
    <name type="primary">hisE</name>
    <name type="ordered locus">STK_14650</name>
</gene>
<protein>
    <recommendedName>
        <fullName>Phosphoribosyl-ATP pyrophosphatase</fullName>
        <shortName>PRA-PH</shortName>
        <ecNumber>3.6.1.31</ecNumber>
    </recommendedName>
</protein>
<evidence type="ECO:0000250" key="1"/>
<evidence type="ECO:0000305" key="2"/>
<organism>
    <name type="scientific">Sulfurisphaera tokodaii (strain DSM 16993 / JCM 10545 / NBRC 100140 / 7)</name>
    <name type="common">Sulfolobus tokodaii</name>
    <dbReference type="NCBI Taxonomy" id="273063"/>
    <lineage>
        <taxon>Archaea</taxon>
        <taxon>Thermoproteota</taxon>
        <taxon>Thermoprotei</taxon>
        <taxon>Sulfolobales</taxon>
        <taxon>Sulfolobaceae</taxon>
        <taxon>Sulfurisphaera</taxon>
    </lineage>
</organism>
<reference key="1">
    <citation type="journal article" date="2001" name="DNA Res.">
        <title>Complete genome sequence of an aerobic thermoacidophilic Crenarchaeon, Sulfolobus tokodaii strain7.</title>
        <authorList>
            <person name="Kawarabayasi Y."/>
            <person name="Hino Y."/>
            <person name="Horikawa H."/>
            <person name="Jin-no K."/>
            <person name="Takahashi M."/>
            <person name="Sekine M."/>
            <person name="Baba S."/>
            <person name="Ankai A."/>
            <person name="Kosugi H."/>
            <person name="Hosoyama A."/>
            <person name="Fukui S."/>
            <person name="Nagai Y."/>
            <person name="Nishijima K."/>
            <person name="Otsuka R."/>
            <person name="Nakazawa H."/>
            <person name="Takamiya M."/>
            <person name="Kato Y."/>
            <person name="Yoshizawa T."/>
            <person name="Tanaka T."/>
            <person name="Kudoh Y."/>
            <person name="Yamazaki J."/>
            <person name="Kushida N."/>
            <person name="Oguchi A."/>
            <person name="Aoki K."/>
            <person name="Masuda S."/>
            <person name="Yanagii M."/>
            <person name="Nishimura M."/>
            <person name="Yamagishi A."/>
            <person name="Oshima T."/>
            <person name="Kikuchi H."/>
        </authorList>
    </citation>
    <scope>NUCLEOTIDE SEQUENCE [LARGE SCALE GENOMIC DNA]</scope>
    <source>
        <strain>DSM 16993 / JCM 10545 / NBRC 100140 / 7</strain>
    </source>
</reference>